<evidence type="ECO:0000250" key="1"/>
<evidence type="ECO:0000255" key="2">
    <source>
        <dbReference type="PROSITE-ProRule" id="PRU00258"/>
    </source>
</evidence>
<evidence type="ECO:0000305" key="3"/>
<proteinExistence type="evidence at protein level"/>
<name>ACP2_SPIOL</name>
<protein>
    <recommendedName>
        <fullName>Acyl carrier protein 2, chloroplastic</fullName>
    </recommendedName>
    <alternativeName>
        <fullName>Acyl carrier protein II</fullName>
        <shortName>ACP II</shortName>
    </alternativeName>
</protein>
<reference key="1">
    <citation type="journal article" date="1990" name="Plant Mol. Biol.">
        <title>A root acyl carrier protein-II from spinach is also expressed in leaves and seeds.</title>
        <authorList>
            <person name="Schmid K.M."/>
            <person name="Ohlrogge J.B."/>
        </authorList>
    </citation>
    <scope>NUCLEOTIDE SEQUENCE [MRNA]</scope>
    <source>
        <strain>cv. Ferry Morse Hyb.424</strain>
        <tissue>Root</tissue>
    </source>
</reference>
<reference key="2">
    <citation type="journal article" date="1985" name="J. Biol. Chem.">
        <title>Plants have isoforms for acyl carrier protein that are expressed differently in different tissues.</title>
        <authorList>
            <person name="Ohlrogge J.B."/>
            <person name="Kuo T.M."/>
        </authorList>
    </citation>
    <scope>PROTEIN SEQUENCE OF 1-20</scope>
</reference>
<gene>
    <name type="primary">ACL1.2</name>
</gene>
<accession>P23235</accession>
<sequence>MASITGSSVSFKCAPLQSSFNSKNYALKSSVTFWRRTPVMPRGLSVSCAAKPEMVTKVSDIVKSQLALAEDAKVTGETKFSEIGADSLDTVEIVMKLEEEFGVTVEEENAQTITTIQEAADMIEALQQNK</sequence>
<comment type="function">
    <text>Carrier of the growing fatty acid chain in fatty acid biosynthesis.</text>
</comment>
<comment type="pathway">
    <text>Lipid metabolism; fatty acid biosynthesis.</text>
</comment>
<comment type="subcellular location">
    <subcellularLocation>
        <location>Plastid</location>
        <location>Chloroplast</location>
    </subcellularLocation>
</comment>
<comment type="tissue specificity">
    <text>Roots, leaves and seeds.</text>
</comment>
<comment type="PTM">
    <text evidence="1">4'-phosphopantetheine is transferred from CoA to a specific serine of apo-ACP by acpS. This modification is essential for activity because fatty acids are bound in thioester linkage to the sulfhydryl of the prosthetic group (By similarity).</text>
</comment>
<comment type="similarity">
    <text evidence="3">Belongs to the acyl carrier protein (ACP) family.</text>
</comment>
<feature type="transit peptide" description="Chloroplast">
    <location>
        <begin position="1"/>
        <end position="48"/>
    </location>
</feature>
<feature type="chain" id="PRO_0000000585" description="Acyl carrier protein 2, chloroplastic">
    <location>
        <begin position="49"/>
        <end position="130"/>
    </location>
</feature>
<feature type="domain" description="Carrier" evidence="2">
    <location>
        <begin position="52"/>
        <end position="127"/>
    </location>
</feature>
<feature type="modified residue" description="O-(pantetheine 4'-phosphoryl)serine" evidence="2">
    <location>
        <position position="87"/>
    </location>
</feature>
<organism>
    <name type="scientific">Spinacia oleracea</name>
    <name type="common">Spinach</name>
    <dbReference type="NCBI Taxonomy" id="3562"/>
    <lineage>
        <taxon>Eukaryota</taxon>
        <taxon>Viridiplantae</taxon>
        <taxon>Streptophyta</taxon>
        <taxon>Embryophyta</taxon>
        <taxon>Tracheophyta</taxon>
        <taxon>Spermatophyta</taxon>
        <taxon>Magnoliopsida</taxon>
        <taxon>eudicotyledons</taxon>
        <taxon>Gunneridae</taxon>
        <taxon>Pentapetalae</taxon>
        <taxon>Caryophyllales</taxon>
        <taxon>Chenopodiaceae</taxon>
        <taxon>Chenopodioideae</taxon>
        <taxon>Anserineae</taxon>
        <taxon>Spinacia</taxon>
    </lineage>
</organism>
<keyword id="KW-0150">Chloroplast</keyword>
<keyword id="KW-0903">Direct protein sequencing</keyword>
<keyword id="KW-0275">Fatty acid biosynthesis</keyword>
<keyword id="KW-0276">Fatty acid metabolism</keyword>
<keyword id="KW-0444">Lipid biosynthesis</keyword>
<keyword id="KW-0443">Lipid metabolism</keyword>
<keyword id="KW-0596">Phosphopantetheine</keyword>
<keyword id="KW-0597">Phosphoprotein</keyword>
<keyword id="KW-0934">Plastid</keyword>
<keyword id="KW-1185">Reference proteome</keyword>
<keyword id="KW-0809">Transit peptide</keyword>
<dbReference type="EMBL" id="X52065">
    <property type="protein sequence ID" value="CAA36288.1"/>
    <property type="molecule type" value="mRNA"/>
</dbReference>
<dbReference type="PIR" id="S12310">
    <property type="entry name" value="S12310"/>
</dbReference>
<dbReference type="SMR" id="P23235"/>
<dbReference type="OrthoDB" id="448946at2759"/>
<dbReference type="UniPathway" id="UPA00094"/>
<dbReference type="Proteomes" id="UP001155700">
    <property type="component" value="Unplaced"/>
</dbReference>
<dbReference type="GO" id="GO:0009507">
    <property type="term" value="C:chloroplast"/>
    <property type="evidence" value="ECO:0007669"/>
    <property type="project" value="UniProtKB-SubCell"/>
</dbReference>
<dbReference type="GO" id="GO:0000036">
    <property type="term" value="F:acyl carrier activity"/>
    <property type="evidence" value="ECO:0007669"/>
    <property type="project" value="InterPro"/>
</dbReference>
<dbReference type="Gene3D" id="1.10.1200.10">
    <property type="entry name" value="ACP-like"/>
    <property type="match status" value="1"/>
</dbReference>
<dbReference type="HAMAP" id="MF_01217">
    <property type="entry name" value="Acyl_carrier"/>
    <property type="match status" value="1"/>
</dbReference>
<dbReference type="InterPro" id="IPR003231">
    <property type="entry name" value="ACP"/>
</dbReference>
<dbReference type="InterPro" id="IPR036736">
    <property type="entry name" value="ACP-like_sf"/>
</dbReference>
<dbReference type="InterPro" id="IPR044813">
    <property type="entry name" value="ACP_chloroplastic"/>
</dbReference>
<dbReference type="InterPro" id="IPR009081">
    <property type="entry name" value="PP-bd_ACP"/>
</dbReference>
<dbReference type="InterPro" id="IPR006162">
    <property type="entry name" value="Ppantetheine_attach_site"/>
</dbReference>
<dbReference type="NCBIfam" id="TIGR00517">
    <property type="entry name" value="acyl_carrier"/>
    <property type="match status" value="1"/>
</dbReference>
<dbReference type="PANTHER" id="PTHR46153">
    <property type="entry name" value="ACYL CARRIER PROTEIN"/>
    <property type="match status" value="1"/>
</dbReference>
<dbReference type="PANTHER" id="PTHR46153:SF20">
    <property type="entry name" value="ACYL CARRIER PROTEIN 2, CHLOROPLASTIC-RELATED"/>
    <property type="match status" value="1"/>
</dbReference>
<dbReference type="Pfam" id="PF00550">
    <property type="entry name" value="PP-binding"/>
    <property type="match status" value="1"/>
</dbReference>
<dbReference type="SUPFAM" id="SSF47336">
    <property type="entry name" value="ACP-like"/>
    <property type="match status" value="1"/>
</dbReference>
<dbReference type="PROSITE" id="PS50075">
    <property type="entry name" value="CARRIER"/>
    <property type="match status" value="1"/>
</dbReference>
<dbReference type="PROSITE" id="PS00012">
    <property type="entry name" value="PHOSPHOPANTETHEINE"/>
    <property type="match status" value="1"/>
</dbReference>